<evidence type="ECO:0000255" key="1">
    <source>
        <dbReference type="HAMAP-Rule" id="MF_00816"/>
    </source>
</evidence>
<evidence type="ECO:0000305" key="2"/>
<gene>
    <name type="ordered locus">YPO1261</name>
    <name type="ordered locus">y2923</name>
    <name type="ordered locus">YP_0880</name>
</gene>
<organism>
    <name type="scientific">Yersinia pestis</name>
    <dbReference type="NCBI Taxonomy" id="632"/>
    <lineage>
        <taxon>Bacteria</taxon>
        <taxon>Pseudomonadati</taxon>
        <taxon>Pseudomonadota</taxon>
        <taxon>Gammaproteobacteria</taxon>
        <taxon>Enterobacterales</taxon>
        <taxon>Yersiniaceae</taxon>
        <taxon>Yersinia</taxon>
    </lineage>
</organism>
<sequence length="75" mass="8360">MPQSSRYSDEHVEQLLSELVSVLEKHRTPTDLSLMVLGNMVTNLINTSIAPAQRKVLARSFAEALQASVREDKAH</sequence>
<feature type="chain" id="PRO_0000201806" description="UPF0352 protein YPO1261/y2923/YP_0880">
    <location>
        <begin position="1"/>
        <end position="75"/>
    </location>
</feature>
<reference key="1">
    <citation type="journal article" date="2001" name="Nature">
        <title>Genome sequence of Yersinia pestis, the causative agent of plague.</title>
        <authorList>
            <person name="Parkhill J."/>
            <person name="Wren B.W."/>
            <person name="Thomson N.R."/>
            <person name="Titball R.W."/>
            <person name="Holden M.T.G."/>
            <person name="Prentice M.B."/>
            <person name="Sebaihia M."/>
            <person name="James K.D."/>
            <person name="Churcher C.M."/>
            <person name="Mungall K.L."/>
            <person name="Baker S."/>
            <person name="Basham D."/>
            <person name="Bentley S.D."/>
            <person name="Brooks K."/>
            <person name="Cerdeno-Tarraga A.-M."/>
            <person name="Chillingworth T."/>
            <person name="Cronin A."/>
            <person name="Davies R.M."/>
            <person name="Davis P."/>
            <person name="Dougan G."/>
            <person name="Feltwell T."/>
            <person name="Hamlin N."/>
            <person name="Holroyd S."/>
            <person name="Jagels K."/>
            <person name="Karlyshev A.V."/>
            <person name="Leather S."/>
            <person name="Moule S."/>
            <person name="Oyston P.C.F."/>
            <person name="Quail M.A."/>
            <person name="Rutherford K.M."/>
            <person name="Simmonds M."/>
            <person name="Skelton J."/>
            <person name="Stevens K."/>
            <person name="Whitehead S."/>
            <person name="Barrell B.G."/>
        </authorList>
    </citation>
    <scope>NUCLEOTIDE SEQUENCE [LARGE SCALE GENOMIC DNA]</scope>
    <source>
        <strain>CO-92 / Biovar Orientalis</strain>
    </source>
</reference>
<reference key="2">
    <citation type="journal article" date="2002" name="J. Bacteriol.">
        <title>Genome sequence of Yersinia pestis KIM.</title>
        <authorList>
            <person name="Deng W."/>
            <person name="Burland V."/>
            <person name="Plunkett G. III"/>
            <person name="Boutin A."/>
            <person name="Mayhew G.F."/>
            <person name="Liss P."/>
            <person name="Perna N.T."/>
            <person name="Rose D.J."/>
            <person name="Mau B."/>
            <person name="Zhou S."/>
            <person name="Schwartz D.C."/>
            <person name="Fetherston J.D."/>
            <person name="Lindler L.E."/>
            <person name="Brubaker R.R."/>
            <person name="Plano G.V."/>
            <person name="Straley S.C."/>
            <person name="McDonough K.A."/>
            <person name="Nilles M.L."/>
            <person name="Matson J.S."/>
            <person name="Blattner F.R."/>
            <person name="Perry R.D."/>
        </authorList>
    </citation>
    <scope>NUCLEOTIDE SEQUENCE [LARGE SCALE GENOMIC DNA]</scope>
    <source>
        <strain>KIM10+ / Biovar Mediaevalis</strain>
    </source>
</reference>
<reference key="3">
    <citation type="journal article" date="2004" name="DNA Res.">
        <title>Complete genome sequence of Yersinia pestis strain 91001, an isolate avirulent to humans.</title>
        <authorList>
            <person name="Song Y."/>
            <person name="Tong Z."/>
            <person name="Wang J."/>
            <person name="Wang L."/>
            <person name="Guo Z."/>
            <person name="Han Y."/>
            <person name="Zhang J."/>
            <person name="Pei D."/>
            <person name="Zhou D."/>
            <person name="Qin H."/>
            <person name="Pang X."/>
            <person name="Han Y."/>
            <person name="Zhai J."/>
            <person name="Li M."/>
            <person name="Cui B."/>
            <person name="Qi Z."/>
            <person name="Jin L."/>
            <person name="Dai R."/>
            <person name="Chen F."/>
            <person name="Li S."/>
            <person name="Ye C."/>
            <person name="Du Z."/>
            <person name="Lin W."/>
            <person name="Wang J."/>
            <person name="Yu J."/>
            <person name="Yang H."/>
            <person name="Wang J."/>
            <person name="Huang P."/>
            <person name="Yang R."/>
        </authorList>
    </citation>
    <scope>NUCLEOTIDE SEQUENCE [LARGE SCALE GENOMIC DNA]</scope>
    <source>
        <strain>91001 / Biovar Mediaevalis</strain>
    </source>
</reference>
<dbReference type="EMBL" id="AL590842">
    <property type="protein sequence ID" value="CAL19918.1"/>
    <property type="molecule type" value="Genomic_DNA"/>
</dbReference>
<dbReference type="EMBL" id="AE009952">
    <property type="protein sequence ID" value="AAM86474.1"/>
    <property type="status" value="ALT_INIT"/>
    <property type="molecule type" value="Genomic_DNA"/>
</dbReference>
<dbReference type="EMBL" id="AE017042">
    <property type="protein sequence ID" value="AAS61137.1"/>
    <property type="status" value="ALT_INIT"/>
    <property type="molecule type" value="Genomic_DNA"/>
</dbReference>
<dbReference type="PIR" id="AD0154">
    <property type="entry name" value="AD0154"/>
</dbReference>
<dbReference type="RefSeq" id="WP_002208836.1">
    <property type="nucleotide sequence ID" value="NZ_WUCM01000057.1"/>
</dbReference>
<dbReference type="RefSeq" id="YP_002346290.1">
    <property type="nucleotide sequence ID" value="NC_003143.1"/>
</dbReference>
<dbReference type="SMR" id="Q8ZGM6"/>
<dbReference type="STRING" id="214092.YPO1261"/>
<dbReference type="PaxDb" id="214092-YPO1261"/>
<dbReference type="EnsemblBacteria" id="AAS61137">
    <property type="protein sequence ID" value="AAS61137"/>
    <property type="gene ID" value="YP_0880"/>
</dbReference>
<dbReference type="KEGG" id="ype:YPO1261"/>
<dbReference type="KEGG" id="ypk:y2923"/>
<dbReference type="KEGG" id="ypm:YP_0880"/>
<dbReference type="PATRIC" id="fig|214092.21.peg.1566"/>
<dbReference type="eggNOG" id="COG3082">
    <property type="taxonomic scope" value="Bacteria"/>
</dbReference>
<dbReference type="HOGENOM" id="CLU_175457_0_0_6"/>
<dbReference type="OMA" id="HQAPTDL"/>
<dbReference type="OrthoDB" id="5771474at2"/>
<dbReference type="Proteomes" id="UP000000815">
    <property type="component" value="Chromosome"/>
</dbReference>
<dbReference type="Proteomes" id="UP000001019">
    <property type="component" value="Chromosome"/>
</dbReference>
<dbReference type="Proteomes" id="UP000002490">
    <property type="component" value="Chromosome"/>
</dbReference>
<dbReference type="Gene3D" id="1.10.3390.10">
    <property type="entry name" value="YejL-like"/>
    <property type="match status" value="1"/>
</dbReference>
<dbReference type="HAMAP" id="MF_00816">
    <property type="entry name" value="UPF0352"/>
    <property type="match status" value="1"/>
</dbReference>
<dbReference type="InterPro" id="IPR009857">
    <property type="entry name" value="UPF0352"/>
</dbReference>
<dbReference type="InterPro" id="IPR023202">
    <property type="entry name" value="YejL_sf"/>
</dbReference>
<dbReference type="NCBIfam" id="NF010242">
    <property type="entry name" value="PRK13689.1"/>
    <property type="match status" value="1"/>
</dbReference>
<dbReference type="Pfam" id="PF07208">
    <property type="entry name" value="DUF1414"/>
    <property type="match status" value="1"/>
</dbReference>
<dbReference type="PIRSF" id="PIRSF006188">
    <property type="entry name" value="UCP006188"/>
    <property type="match status" value="1"/>
</dbReference>
<dbReference type="SUPFAM" id="SSF158651">
    <property type="entry name" value="YejL-like"/>
    <property type="match status" value="1"/>
</dbReference>
<keyword id="KW-1185">Reference proteome</keyword>
<proteinExistence type="inferred from homology"/>
<protein>
    <recommendedName>
        <fullName evidence="1">UPF0352 protein YPO1261/y2923/YP_0880</fullName>
    </recommendedName>
</protein>
<name>Y1261_YERPE</name>
<comment type="similarity">
    <text evidence="1">Belongs to the UPF0352 family.</text>
</comment>
<comment type="sequence caution" evidence="2">
    <conflict type="erroneous initiation">
        <sequence resource="EMBL-CDS" id="AAM86474"/>
    </conflict>
</comment>
<comment type="sequence caution" evidence="2">
    <conflict type="erroneous initiation">
        <sequence resource="EMBL-CDS" id="AAS61137"/>
    </conflict>
</comment>
<accession>Q8ZGM6</accession>
<accession>Q0WHE8</accession>
<accession>Q74WJ0</accession>
<accession>Q8D021</accession>